<comment type="similarity">
    <text evidence="1">Belongs to the WD repeat LEC14B family.</text>
</comment>
<reference key="1">
    <citation type="submission" date="1996-02" db="EMBL/GenBank/DDBJ databases">
        <title>Nucleotide sequence of a cDNA cloned from Lithospermum erythrorhizon cell cultures.</title>
        <authorList>
            <person name="Yazaki K."/>
            <person name="Bechthold A."/>
        </authorList>
    </citation>
    <scope>NUCLEOTIDE SEQUENCE [MRNA]</scope>
</reference>
<keyword id="KW-0677">Repeat</keyword>
<keyword id="KW-0853">WD repeat</keyword>
<dbReference type="EMBL" id="D83074">
    <property type="protein sequence ID" value="BAA11768.1"/>
    <property type="molecule type" value="mRNA"/>
</dbReference>
<dbReference type="SMR" id="Q40153"/>
<dbReference type="GO" id="GO:0080008">
    <property type="term" value="C:Cul4-RING E3 ubiquitin ligase complex"/>
    <property type="evidence" value="ECO:0007669"/>
    <property type="project" value="TreeGrafter"/>
</dbReference>
<dbReference type="GO" id="GO:0043161">
    <property type="term" value="P:proteasome-mediated ubiquitin-dependent protein catabolic process"/>
    <property type="evidence" value="ECO:0007669"/>
    <property type="project" value="TreeGrafter"/>
</dbReference>
<dbReference type="FunFam" id="2.130.10.10:FF:000492">
    <property type="entry name" value="LEC14B homolog isoform X2"/>
    <property type="match status" value="1"/>
</dbReference>
<dbReference type="FunFam" id="2.130.10.10:FF:000557">
    <property type="entry name" value="WD repeat protein"/>
    <property type="match status" value="1"/>
</dbReference>
<dbReference type="Gene3D" id="2.130.10.10">
    <property type="entry name" value="YVTN repeat-like/Quinoprotein amine dehydrogenase"/>
    <property type="match status" value="2"/>
</dbReference>
<dbReference type="InterPro" id="IPR051859">
    <property type="entry name" value="DCAF"/>
</dbReference>
<dbReference type="InterPro" id="IPR017399">
    <property type="entry name" value="DCAF11/LEC14B"/>
</dbReference>
<dbReference type="InterPro" id="IPR020472">
    <property type="entry name" value="G-protein_beta_WD-40_rep"/>
</dbReference>
<dbReference type="InterPro" id="IPR015943">
    <property type="entry name" value="WD40/YVTN_repeat-like_dom_sf"/>
</dbReference>
<dbReference type="InterPro" id="IPR036322">
    <property type="entry name" value="WD40_repeat_dom_sf"/>
</dbReference>
<dbReference type="InterPro" id="IPR001680">
    <property type="entry name" value="WD40_rpt"/>
</dbReference>
<dbReference type="PANTHER" id="PTHR19847">
    <property type="entry name" value="DDB1- AND CUL4-ASSOCIATED FACTOR 11"/>
    <property type="match status" value="1"/>
</dbReference>
<dbReference type="PANTHER" id="PTHR19847:SF27">
    <property type="entry name" value="LEC14B HOMOLOG"/>
    <property type="match status" value="1"/>
</dbReference>
<dbReference type="Pfam" id="PF00400">
    <property type="entry name" value="WD40"/>
    <property type="match status" value="5"/>
</dbReference>
<dbReference type="PIRSF" id="PIRSF038135">
    <property type="entry name" value="WD_repeat_p23"/>
    <property type="match status" value="1"/>
</dbReference>
<dbReference type="PRINTS" id="PR00320">
    <property type="entry name" value="GPROTEINBRPT"/>
</dbReference>
<dbReference type="SMART" id="SM00320">
    <property type="entry name" value="WD40"/>
    <property type="match status" value="6"/>
</dbReference>
<dbReference type="SUPFAM" id="SSF50978">
    <property type="entry name" value="WD40 repeat-like"/>
    <property type="match status" value="1"/>
</dbReference>
<dbReference type="PROSITE" id="PS50082">
    <property type="entry name" value="WD_REPEATS_2"/>
    <property type="match status" value="4"/>
</dbReference>
<dbReference type="PROSITE" id="PS50294">
    <property type="entry name" value="WD_REPEATS_REGION"/>
    <property type="match status" value="1"/>
</dbReference>
<feature type="chain" id="PRO_0000051055" description="LEC14B protein">
    <location>
        <begin position="1"/>
        <end position="473"/>
    </location>
</feature>
<feature type="repeat" description="WD 1">
    <location>
        <begin position="212"/>
        <end position="242"/>
    </location>
</feature>
<feature type="repeat" description="WD 2">
    <location>
        <begin position="254"/>
        <end position="285"/>
    </location>
</feature>
<feature type="repeat" description="WD 3">
    <location>
        <begin position="301"/>
        <end position="331"/>
    </location>
</feature>
<feature type="repeat" description="WD 4">
    <location>
        <begin position="377"/>
        <end position="413"/>
    </location>
</feature>
<feature type="repeat" description="WD 5">
    <location>
        <begin position="425"/>
        <end position="455"/>
    </location>
</feature>
<accession>Q40153</accession>
<organism>
    <name type="scientific">Lithospermum erythrorhizon</name>
    <name type="common">Purple gromwell</name>
    <name type="synonym">Lithospermum officinale var. erythrorhizon</name>
    <dbReference type="NCBI Taxonomy" id="34254"/>
    <lineage>
        <taxon>Eukaryota</taxon>
        <taxon>Viridiplantae</taxon>
        <taxon>Streptophyta</taxon>
        <taxon>Embryophyta</taxon>
        <taxon>Tracheophyta</taxon>
        <taxon>Spermatophyta</taxon>
        <taxon>Magnoliopsida</taxon>
        <taxon>eudicotyledons</taxon>
        <taxon>Gunneridae</taxon>
        <taxon>Pentapetalae</taxon>
        <taxon>asterids</taxon>
        <taxon>lamiids</taxon>
        <taxon>Boraginales</taxon>
        <taxon>Boraginaceae</taxon>
        <taxon>Boraginoideae</taxon>
        <taxon>Lithospermeae</taxon>
        <taxon>Lithospermum</taxon>
    </lineage>
</organism>
<name>LE14B_LITER</name>
<evidence type="ECO:0000305" key="1"/>
<protein>
    <recommendedName>
        <fullName>LEC14B protein</fullName>
    </recommendedName>
</protein>
<proteinExistence type="evidence at transcript level"/>
<sequence>MGYAMSRFETDVSVIFSSSSDSETSHDSLINKPVKNLDHEIAQLTRLRSAPHENLSRDLLVKRVLPLSTMKMLAGREANVSGRGRFSSADCCHVVSRHLPVNDPCVVDQMTSRVYLSQFSTDGSLFIAGFQGCHIRIYNVDKGWKVQNDIIAKCVRWTITDASLSPDQKFLAYASLTPIAHIVKFGSAATESHANVTDIHDGLDFSSNDDGGYSFGVFSIKFSTDGREIVAGTSDESICVYDLEADRLSLRISAHESDVNSVCFADESGHLIYSGSDDNLCKVWDRRCFNAKGKPAGILMGHLEGITFIDSRGDGRYFISNGKDQTIKLWDIRKMSSNAGGTIQSRNSEWDYRWMEYPQEARDLKHPSDLSGATYKGHSVLCTLIRCYFSPDYSTGQKYIYTGSHDANVYIYDLVTGDQVSTLQYHKATVRDCSWHPNYPMLVSSSFDGEIVKWEYRGNDEAPVQGNNQRLQR</sequence>